<evidence type="ECO:0000250" key="1"/>
<evidence type="ECO:0000255" key="2"/>
<evidence type="ECO:0000305" key="3"/>
<accession>Q6NRS6</accession>
<reference key="1">
    <citation type="submission" date="2004-05" db="EMBL/GenBank/DDBJ databases">
        <authorList>
            <consortium name="NIH - Xenopus Gene Collection (XGC) project"/>
        </authorList>
    </citation>
    <scope>NUCLEOTIDE SEQUENCE [LARGE SCALE MRNA]</scope>
    <source>
        <tissue>Liver</tissue>
    </source>
</reference>
<feature type="chain" id="PRO_0000287438" description="DNA damage-regulated autophagy modulator protein 1">
    <location>
        <begin position="1"/>
        <end position="239"/>
    </location>
</feature>
<feature type="transmembrane region" description="Helical" evidence="2">
    <location>
        <begin position="15"/>
        <end position="35"/>
    </location>
</feature>
<feature type="transmembrane region" description="Helical" evidence="2">
    <location>
        <begin position="54"/>
        <end position="74"/>
    </location>
</feature>
<feature type="transmembrane region" description="Helical" evidence="2">
    <location>
        <begin position="91"/>
        <end position="111"/>
    </location>
</feature>
<feature type="transmembrane region" description="Helical" evidence="2">
    <location>
        <begin position="119"/>
        <end position="139"/>
    </location>
</feature>
<feature type="transmembrane region" description="Helical" evidence="2">
    <location>
        <begin position="162"/>
        <end position="182"/>
    </location>
</feature>
<feature type="transmembrane region" description="Helical" evidence="2">
    <location>
        <begin position="201"/>
        <end position="221"/>
    </location>
</feature>
<comment type="function">
    <text evidence="1">Lysosomal modulator of autophagy that plays a central role in p53/TP53-mediated apoptosis.</text>
</comment>
<comment type="subcellular location">
    <subcellularLocation>
        <location evidence="1">Lysosome membrane</location>
        <topology evidence="1">Multi-pass membrane protein</topology>
    </subcellularLocation>
</comment>
<comment type="similarity">
    <text evidence="3">Belongs to the DRAM/TMEM150 family.</text>
</comment>
<comment type="sequence caution" evidence="3">
    <conflict type="erroneous initiation">
        <sequence resource="EMBL-CDS" id="AAH70646"/>
    </conflict>
</comment>
<organism>
    <name type="scientific">Xenopus laevis</name>
    <name type="common">African clawed frog</name>
    <dbReference type="NCBI Taxonomy" id="8355"/>
    <lineage>
        <taxon>Eukaryota</taxon>
        <taxon>Metazoa</taxon>
        <taxon>Chordata</taxon>
        <taxon>Craniata</taxon>
        <taxon>Vertebrata</taxon>
        <taxon>Euteleostomi</taxon>
        <taxon>Amphibia</taxon>
        <taxon>Batrachia</taxon>
        <taxon>Anura</taxon>
        <taxon>Pipoidea</taxon>
        <taxon>Pipidae</taxon>
        <taxon>Xenopodinae</taxon>
        <taxon>Xenopus</taxon>
        <taxon>Xenopus</taxon>
    </lineage>
</organism>
<dbReference type="EMBL" id="BC070646">
    <property type="protein sequence ID" value="AAH70646.1"/>
    <property type="status" value="ALT_INIT"/>
    <property type="molecule type" value="mRNA"/>
</dbReference>
<dbReference type="AGR" id="Xenbase:XB-GENE-17331887"/>
<dbReference type="Xenbase" id="XB-GENE-17331887">
    <property type="gene designation" value="dram1.L"/>
</dbReference>
<dbReference type="Proteomes" id="UP000186698">
    <property type="component" value="Unplaced"/>
</dbReference>
<dbReference type="GO" id="GO:0005765">
    <property type="term" value="C:lysosomal membrane"/>
    <property type="evidence" value="ECO:0007669"/>
    <property type="project" value="UniProtKB-SubCell"/>
</dbReference>
<dbReference type="GO" id="GO:0005764">
    <property type="term" value="C:lysosome"/>
    <property type="evidence" value="ECO:0000318"/>
    <property type="project" value="GO_Central"/>
</dbReference>
<dbReference type="GO" id="GO:0006915">
    <property type="term" value="P:apoptotic process"/>
    <property type="evidence" value="ECO:0007669"/>
    <property type="project" value="UniProtKB-KW"/>
</dbReference>
<dbReference type="GO" id="GO:0006914">
    <property type="term" value="P:autophagy"/>
    <property type="evidence" value="ECO:0007669"/>
    <property type="project" value="UniProtKB-KW"/>
</dbReference>
<dbReference type="GO" id="GO:0010506">
    <property type="term" value="P:regulation of autophagy"/>
    <property type="evidence" value="ECO:0000318"/>
    <property type="project" value="GO_Central"/>
</dbReference>
<dbReference type="InterPro" id="IPR050911">
    <property type="entry name" value="DRAM/TMEM150_Autophagy_Mod"/>
</dbReference>
<dbReference type="InterPro" id="IPR019402">
    <property type="entry name" value="Frag1/DRAM/Sfk1"/>
</dbReference>
<dbReference type="PANTHER" id="PTHR21324:SF11">
    <property type="entry name" value="DNA DAMAGE-REGULATED AUTOPHAGY MODULATOR PROTEIN 1"/>
    <property type="match status" value="1"/>
</dbReference>
<dbReference type="PANTHER" id="PTHR21324">
    <property type="entry name" value="FASTING-INDUCIBLE INTEGRAL MEMBRANE PROTEIN TM6P1-RELATED"/>
    <property type="match status" value="1"/>
</dbReference>
<dbReference type="Pfam" id="PF10277">
    <property type="entry name" value="Frag1"/>
    <property type="match status" value="1"/>
</dbReference>
<name>DRAM1_XENLA</name>
<gene>
    <name type="primary">dram1</name>
    <name type="synonym">dram</name>
</gene>
<proteinExistence type="evidence at transcript level"/>
<keyword id="KW-0053">Apoptosis</keyword>
<keyword id="KW-0072">Autophagy</keyword>
<keyword id="KW-0458">Lysosome</keyword>
<keyword id="KW-0472">Membrane</keyword>
<keyword id="KW-1185">Reference proteome</keyword>
<keyword id="KW-0812">Transmembrane</keyword>
<keyword id="KW-1133">Transmembrane helix</keyword>
<sequence length="239" mass="26622">MHCWCLQGAAFLPSILVIWSSAGFLFSYIISVLIGHVPPFVPYISDTGTSPPESGVFGFMISVSAMLGAATMYTRYMILERQNLSIDFLPIYFNKISLAIGLFGCIGMGIVATFQEMAVPAVHDAGALITFICGVMYILLQSYISYKSCPTWNTRATCHIRMTVSLIAFIAVVPMSVFSILSGRKRLDWKPSDEGYPYHLTSAICEWTVAFGFNMYFLTFIRDFQGVSIQISTEIHEDF</sequence>
<protein>
    <recommendedName>
        <fullName>DNA damage-regulated autophagy modulator protein 1</fullName>
    </recommendedName>
    <alternativeName>
        <fullName>Damage-regulated autophagy modulator</fullName>
    </alternativeName>
</protein>